<organism>
    <name type="scientific">Cupriavidus pinatubonensis (strain JMP 134 / LMG 1197)</name>
    <name type="common">Cupriavidus necator (strain JMP 134)</name>
    <dbReference type="NCBI Taxonomy" id="264198"/>
    <lineage>
        <taxon>Bacteria</taxon>
        <taxon>Pseudomonadati</taxon>
        <taxon>Pseudomonadota</taxon>
        <taxon>Betaproteobacteria</taxon>
        <taxon>Burkholderiales</taxon>
        <taxon>Burkholderiaceae</taxon>
        <taxon>Cupriavidus</taxon>
    </lineage>
</organism>
<accession>Q476E9</accession>
<proteinExistence type="inferred from homology"/>
<comment type="function">
    <text evidence="1">Catalyzes the ATP- as well as the pyrophosphate-dependent phosphorylation of a specific serine residue in HPr, a phosphocarrier protein of the phosphoenolpyruvate-dependent sugar phosphotransferase system (PTS). HprK/P also catalyzes the pyrophosphate-producing, inorganic phosphate-dependent dephosphorylation (phosphorolysis) of seryl-phosphorylated HPr (P-Ser-HPr).</text>
</comment>
<comment type="catalytic activity">
    <reaction evidence="1">
        <text>[HPr protein]-L-serine + ATP = [HPr protein]-O-phospho-L-serine + ADP + H(+)</text>
        <dbReference type="Rhea" id="RHEA:46600"/>
        <dbReference type="Rhea" id="RHEA-COMP:11602"/>
        <dbReference type="Rhea" id="RHEA-COMP:11603"/>
        <dbReference type="ChEBI" id="CHEBI:15378"/>
        <dbReference type="ChEBI" id="CHEBI:29999"/>
        <dbReference type="ChEBI" id="CHEBI:30616"/>
        <dbReference type="ChEBI" id="CHEBI:83421"/>
        <dbReference type="ChEBI" id="CHEBI:456216"/>
    </reaction>
</comment>
<comment type="catalytic activity">
    <reaction evidence="1">
        <text>[HPr protein]-O-phospho-L-serine + phosphate + H(+) = [HPr protein]-L-serine + diphosphate</text>
        <dbReference type="Rhea" id="RHEA:46604"/>
        <dbReference type="Rhea" id="RHEA-COMP:11602"/>
        <dbReference type="Rhea" id="RHEA-COMP:11603"/>
        <dbReference type="ChEBI" id="CHEBI:15378"/>
        <dbReference type="ChEBI" id="CHEBI:29999"/>
        <dbReference type="ChEBI" id="CHEBI:33019"/>
        <dbReference type="ChEBI" id="CHEBI:43474"/>
        <dbReference type="ChEBI" id="CHEBI:83421"/>
    </reaction>
</comment>
<comment type="cofactor">
    <cofactor evidence="1">
        <name>Mg(2+)</name>
        <dbReference type="ChEBI" id="CHEBI:18420"/>
    </cofactor>
</comment>
<comment type="subunit">
    <text evidence="1">Homohexamer.</text>
</comment>
<comment type="domain">
    <text evidence="1">The Walker A ATP-binding motif also binds Pi and PPi.</text>
</comment>
<comment type="miscellaneous">
    <text evidence="1">Both phosphorylation and phosphorolysis are carried out by the same active site and suggest a common mechanism for both reactions.</text>
</comment>
<comment type="similarity">
    <text evidence="1">Belongs to the HPrK/P family.</text>
</comment>
<protein>
    <recommendedName>
        <fullName evidence="1">HPr kinase/phosphorylase</fullName>
        <shortName evidence="1">HPrK/P</shortName>
        <ecNumber evidence="1">2.7.11.-</ecNumber>
        <ecNumber evidence="1">2.7.4.-</ecNumber>
    </recommendedName>
    <alternativeName>
        <fullName evidence="1">HPr(Ser) kinase/phosphorylase</fullName>
    </alternativeName>
</protein>
<evidence type="ECO:0000255" key="1">
    <source>
        <dbReference type="HAMAP-Rule" id="MF_01249"/>
    </source>
</evidence>
<keyword id="KW-0067">ATP-binding</keyword>
<keyword id="KW-0418">Kinase</keyword>
<keyword id="KW-0460">Magnesium</keyword>
<keyword id="KW-0479">Metal-binding</keyword>
<keyword id="KW-0511">Multifunctional enzyme</keyword>
<keyword id="KW-0547">Nucleotide-binding</keyword>
<keyword id="KW-0723">Serine/threonine-protein kinase</keyword>
<keyword id="KW-0808">Transferase</keyword>
<dbReference type="EC" id="2.7.11.-" evidence="1"/>
<dbReference type="EC" id="2.7.4.-" evidence="1"/>
<dbReference type="EMBL" id="CP000090">
    <property type="protein sequence ID" value="AAZ59734.1"/>
    <property type="molecule type" value="Genomic_DNA"/>
</dbReference>
<dbReference type="SMR" id="Q476E9"/>
<dbReference type="STRING" id="264198.Reut_A0352"/>
<dbReference type="KEGG" id="reu:Reut_A0352"/>
<dbReference type="eggNOG" id="COG1493">
    <property type="taxonomic scope" value="Bacteria"/>
</dbReference>
<dbReference type="HOGENOM" id="CLU_052030_0_2_4"/>
<dbReference type="OrthoDB" id="9778803at2"/>
<dbReference type="GO" id="GO:0005524">
    <property type="term" value="F:ATP binding"/>
    <property type="evidence" value="ECO:0007669"/>
    <property type="project" value="UniProtKB-UniRule"/>
</dbReference>
<dbReference type="GO" id="GO:0000287">
    <property type="term" value="F:magnesium ion binding"/>
    <property type="evidence" value="ECO:0007669"/>
    <property type="project" value="UniProtKB-UniRule"/>
</dbReference>
<dbReference type="GO" id="GO:0000155">
    <property type="term" value="F:phosphorelay sensor kinase activity"/>
    <property type="evidence" value="ECO:0007669"/>
    <property type="project" value="InterPro"/>
</dbReference>
<dbReference type="GO" id="GO:0004674">
    <property type="term" value="F:protein serine/threonine kinase activity"/>
    <property type="evidence" value="ECO:0007669"/>
    <property type="project" value="UniProtKB-KW"/>
</dbReference>
<dbReference type="GO" id="GO:0004712">
    <property type="term" value="F:protein serine/threonine/tyrosine kinase activity"/>
    <property type="evidence" value="ECO:0007669"/>
    <property type="project" value="UniProtKB-UniRule"/>
</dbReference>
<dbReference type="GO" id="GO:0006109">
    <property type="term" value="P:regulation of carbohydrate metabolic process"/>
    <property type="evidence" value="ECO:0007669"/>
    <property type="project" value="UniProtKB-UniRule"/>
</dbReference>
<dbReference type="CDD" id="cd01918">
    <property type="entry name" value="HprK_C"/>
    <property type="match status" value="1"/>
</dbReference>
<dbReference type="FunFam" id="3.40.50.300:FF:000174">
    <property type="entry name" value="HPr kinase/phosphorylase"/>
    <property type="match status" value="1"/>
</dbReference>
<dbReference type="Gene3D" id="3.40.1390.20">
    <property type="entry name" value="HprK N-terminal domain-like"/>
    <property type="match status" value="1"/>
</dbReference>
<dbReference type="Gene3D" id="3.40.50.300">
    <property type="entry name" value="P-loop containing nucleotide triphosphate hydrolases"/>
    <property type="match status" value="1"/>
</dbReference>
<dbReference type="HAMAP" id="MF_01249">
    <property type="entry name" value="HPr_kinase"/>
    <property type="match status" value="1"/>
</dbReference>
<dbReference type="InterPro" id="IPR003755">
    <property type="entry name" value="HPr(Ser)_kin/Pase"/>
</dbReference>
<dbReference type="InterPro" id="IPR011104">
    <property type="entry name" value="Hpr_kin/Pase_C"/>
</dbReference>
<dbReference type="InterPro" id="IPR011126">
    <property type="entry name" value="Hpr_kin/Pase_Hpr_N"/>
</dbReference>
<dbReference type="InterPro" id="IPR027417">
    <property type="entry name" value="P-loop_NTPase"/>
</dbReference>
<dbReference type="InterPro" id="IPR028979">
    <property type="entry name" value="Ser_kin/Pase_Hpr-like_N_sf"/>
</dbReference>
<dbReference type="NCBIfam" id="TIGR00679">
    <property type="entry name" value="hpr-ser"/>
    <property type="match status" value="1"/>
</dbReference>
<dbReference type="PANTHER" id="PTHR30305:SF1">
    <property type="entry name" value="HPR KINASE_PHOSPHORYLASE"/>
    <property type="match status" value="1"/>
</dbReference>
<dbReference type="PANTHER" id="PTHR30305">
    <property type="entry name" value="PROTEIN YJDM-RELATED"/>
    <property type="match status" value="1"/>
</dbReference>
<dbReference type="Pfam" id="PF07475">
    <property type="entry name" value="Hpr_kinase_C"/>
    <property type="match status" value="1"/>
</dbReference>
<dbReference type="Pfam" id="PF02603">
    <property type="entry name" value="Hpr_kinase_N"/>
    <property type="match status" value="1"/>
</dbReference>
<dbReference type="SUPFAM" id="SSF75138">
    <property type="entry name" value="HprK N-terminal domain-like"/>
    <property type="match status" value="1"/>
</dbReference>
<dbReference type="SUPFAM" id="SSF53795">
    <property type="entry name" value="PEP carboxykinase-like"/>
    <property type="match status" value="1"/>
</dbReference>
<reference key="1">
    <citation type="journal article" date="2010" name="PLoS ONE">
        <title>The complete multipartite genome sequence of Cupriavidus necator JMP134, a versatile pollutant degrader.</title>
        <authorList>
            <person name="Lykidis A."/>
            <person name="Perez-Pantoja D."/>
            <person name="Ledger T."/>
            <person name="Mavromatis K."/>
            <person name="Anderson I.J."/>
            <person name="Ivanova N.N."/>
            <person name="Hooper S.D."/>
            <person name="Lapidus A."/>
            <person name="Lucas S."/>
            <person name="Gonzalez B."/>
            <person name="Kyrpides N.C."/>
        </authorList>
    </citation>
    <scope>NUCLEOTIDE SEQUENCE [LARGE SCALE GENOMIC DNA]</scope>
    <source>
        <strain>JMP134 / LMG 1197</strain>
    </source>
</reference>
<gene>
    <name evidence="1" type="primary">hprK</name>
    <name type="ordered locus">Reut_A0352</name>
</gene>
<name>HPRK_CUPPJ</name>
<feature type="chain" id="PRO_1000067168" description="HPr kinase/phosphorylase">
    <location>
        <begin position="1"/>
        <end position="323"/>
    </location>
</feature>
<feature type="region of interest" description="Important for the catalytic mechanism of both phosphorylation and dephosphorylation" evidence="1">
    <location>
        <begin position="209"/>
        <end position="218"/>
    </location>
</feature>
<feature type="region of interest" description="Important for the catalytic mechanism of dephosphorylation" evidence="1">
    <location>
        <begin position="271"/>
        <end position="276"/>
    </location>
</feature>
<feature type="active site" evidence="1">
    <location>
        <position position="146"/>
    </location>
</feature>
<feature type="active site" evidence="1">
    <location>
        <position position="167"/>
    </location>
</feature>
<feature type="active site" description="Proton acceptor; for phosphorylation activity. Proton donor; for dephosphorylation activity" evidence="1">
    <location>
        <position position="185"/>
    </location>
</feature>
<feature type="active site" evidence="1">
    <location>
        <position position="250"/>
    </location>
</feature>
<feature type="binding site" evidence="1">
    <location>
        <begin position="161"/>
        <end position="168"/>
    </location>
    <ligand>
        <name>ATP</name>
        <dbReference type="ChEBI" id="CHEBI:30616"/>
    </ligand>
</feature>
<feature type="binding site" evidence="1">
    <location>
        <position position="168"/>
    </location>
    <ligand>
        <name>Mg(2+)</name>
        <dbReference type="ChEBI" id="CHEBI:18420"/>
    </ligand>
</feature>
<feature type="binding site" evidence="1">
    <location>
        <position position="210"/>
    </location>
    <ligand>
        <name>Mg(2+)</name>
        <dbReference type="ChEBI" id="CHEBI:18420"/>
    </ligand>
</feature>
<sequence>MELTGVTSQSIFDDNAADIKLSWVAGLEGADRAFDVEFAREATSAADLVGHLNLIHPNRIQVLGKPEITYYQRLDDETRKRQMGELILLEPPFLVVADGMEPPPDLELRCTRSSTPLFTTPVSSAAVIDHLRLYLSRISAPRVTMHGVFLDILGMGVLIMGESGLGKSELGLELISRGHGLVADDAVDFVRLGPDFIEGRCPPLLQNLLEVRGLGLLDIKTIFGETAVRRKMKMKLVVQLVRRNDGEFERLPLDSQYLDVLGLPIHMVKIQVAAGRNLAVLVEAAVRNTILRLRGIDTLRDFMDRQRAAMQADAVSRGQGRLL</sequence>